<reference key="1">
    <citation type="journal article" date="2002" name="Nature">
        <title>The genome sequence of Schizosaccharomyces pombe.</title>
        <authorList>
            <person name="Wood V."/>
            <person name="Gwilliam R."/>
            <person name="Rajandream M.A."/>
            <person name="Lyne M.H."/>
            <person name="Lyne R."/>
            <person name="Stewart A."/>
            <person name="Sgouros J.G."/>
            <person name="Peat N."/>
            <person name="Hayles J."/>
            <person name="Baker S.G."/>
            <person name="Basham D."/>
            <person name="Bowman S."/>
            <person name="Brooks K."/>
            <person name="Brown D."/>
            <person name="Brown S."/>
            <person name="Chillingworth T."/>
            <person name="Churcher C.M."/>
            <person name="Collins M."/>
            <person name="Connor R."/>
            <person name="Cronin A."/>
            <person name="Davis P."/>
            <person name="Feltwell T."/>
            <person name="Fraser A."/>
            <person name="Gentles S."/>
            <person name="Goble A."/>
            <person name="Hamlin N."/>
            <person name="Harris D.E."/>
            <person name="Hidalgo J."/>
            <person name="Hodgson G."/>
            <person name="Holroyd S."/>
            <person name="Hornsby T."/>
            <person name="Howarth S."/>
            <person name="Huckle E.J."/>
            <person name="Hunt S."/>
            <person name="Jagels K."/>
            <person name="James K.D."/>
            <person name="Jones L."/>
            <person name="Jones M."/>
            <person name="Leather S."/>
            <person name="McDonald S."/>
            <person name="McLean J."/>
            <person name="Mooney P."/>
            <person name="Moule S."/>
            <person name="Mungall K.L."/>
            <person name="Murphy L.D."/>
            <person name="Niblett D."/>
            <person name="Odell C."/>
            <person name="Oliver K."/>
            <person name="O'Neil S."/>
            <person name="Pearson D."/>
            <person name="Quail M.A."/>
            <person name="Rabbinowitsch E."/>
            <person name="Rutherford K.M."/>
            <person name="Rutter S."/>
            <person name="Saunders D."/>
            <person name="Seeger K."/>
            <person name="Sharp S."/>
            <person name="Skelton J."/>
            <person name="Simmonds M.N."/>
            <person name="Squares R."/>
            <person name="Squares S."/>
            <person name="Stevens K."/>
            <person name="Taylor K."/>
            <person name="Taylor R.G."/>
            <person name="Tivey A."/>
            <person name="Walsh S.V."/>
            <person name="Warren T."/>
            <person name="Whitehead S."/>
            <person name="Woodward J.R."/>
            <person name="Volckaert G."/>
            <person name="Aert R."/>
            <person name="Robben J."/>
            <person name="Grymonprez B."/>
            <person name="Weltjens I."/>
            <person name="Vanstreels E."/>
            <person name="Rieger M."/>
            <person name="Schaefer M."/>
            <person name="Mueller-Auer S."/>
            <person name="Gabel C."/>
            <person name="Fuchs M."/>
            <person name="Duesterhoeft A."/>
            <person name="Fritzc C."/>
            <person name="Holzer E."/>
            <person name="Moestl D."/>
            <person name="Hilbert H."/>
            <person name="Borzym K."/>
            <person name="Langer I."/>
            <person name="Beck A."/>
            <person name="Lehrach H."/>
            <person name="Reinhardt R."/>
            <person name="Pohl T.M."/>
            <person name="Eger P."/>
            <person name="Zimmermann W."/>
            <person name="Wedler H."/>
            <person name="Wambutt R."/>
            <person name="Purnelle B."/>
            <person name="Goffeau A."/>
            <person name="Cadieu E."/>
            <person name="Dreano S."/>
            <person name="Gloux S."/>
            <person name="Lelaure V."/>
            <person name="Mottier S."/>
            <person name="Galibert F."/>
            <person name="Aves S.J."/>
            <person name="Xiang Z."/>
            <person name="Hunt C."/>
            <person name="Moore K."/>
            <person name="Hurst S.M."/>
            <person name="Lucas M."/>
            <person name="Rochet M."/>
            <person name="Gaillardin C."/>
            <person name="Tallada V.A."/>
            <person name="Garzon A."/>
            <person name="Thode G."/>
            <person name="Daga R.R."/>
            <person name="Cruzado L."/>
            <person name="Jimenez J."/>
            <person name="Sanchez M."/>
            <person name="del Rey F."/>
            <person name="Benito J."/>
            <person name="Dominguez A."/>
            <person name="Revuelta J.L."/>
            <person name="Moreno S."/>
            <person name="Armstrong J."/>
            <person name="Forsburg S.L."/>
            <person name="Cerutti L."/>
            <person name="Lowe T."/>
            <person name="McCombie W.R."/>
            <person name="Paulsen I."/>
            <person name="Potashkin J."/>
            <person name="Shpakovski G.V."/>
            <person name="Ussery D."/>
            <person name="Barrell B.G."/>
            <person name="Nurse P."/>
        </authorList>
    </citation>
    <scope>NUCLEOTIDE SEQUENCE [LARGE SCALE GENOMIC DNA]</scope>
    <source>
        <strain>972 / ATCC 24843</strain>
    </source>
</reference>
<reference key="2">
    <citation type="journal article" date="2007" name="Yeast">
        <title>Mass spectrometric identification of covalently bound cell wall proteins from the fission yeast Schizosaccharomyces pombe.</title>
        <authorList>
            <person name="de Groot P.W.J."/>
            <person name="Yin Q.Y."/>
            <person name="Weig M."/>
            <person name="Sosinska G.J."/>
            <person name="Klis F.M."/>
            <person name="de Koster C.G."/>
        </authorList>
    </citation>
    <scope>IDENTIFICATION BY MASS SPECTROMETRY</scope>
    <scope>SUBCELLULAR LOCATION</scope>
</reference>
<reference key="3">
    <citation type="journal article" date="2010" name="Mol. Biol. Cell">
        <title>The cell surface protein gene ecm33+ is a target of the two transcription factors Atf1 and Mbx1 and negatively regulates Pmk1 MAPK cell integrity signaling in fission yeast.</title>
        <authorList>
            <person name="Takada H."/>
            <person name="Nishida A."/>
            <person name="Domae M."/>
            <person name="Kita A."/>
            <person name="Yamano Y."/>
            <person name="Uchida A."/>
            <person name="Ishiwata S."/>
            <person name="Fang Y."/>
            <person name="Zhou X."/>
            <person name="Masuko T."/>
            <person name="Kinoshita M."/>
            <person name="Kakehi K."/>
            <person name="Sugiura R."/>
        </authorList>
    </citation>
    <scope>INDUCTION</scope>
    <scope>SUBCELLULAR LOCATION</scope>
    <scope>FUNCTION</scope>
</reference>
<accession>O13960</accession>
<accession>O13887</accession>
<accession>Q9P7A7</accession>
<protein>
    <recommendedName>
        <fullName>Cell wall protein ecm33</fullName>
    </recommendedName>
</protein>
<dbReference type="EMBL" id="Z98976">
    <property type="protein sequence ID" value="CAB11655.3"/>
    <property type="molecule type" value="Genomic_DNA"/>
</dbReference>
<dbReference type="EMBL" id="CU329670">
    <property type="protein sequence ID" value="CAB86946.2"/>
    <property type="molecule type" value="Genomic_DNA"/>
</dbReference>
<dbReference type="PIR" id="T38309">
    <property type="entry name" value="T38309"/>
</dbReference>
<dbReference type="RefSeq" id="XP_001713055.1">
    <property type="nucleotide sequence ID" value="XM_001713003.2"/>
</dbReference>
<dbReference type="SMR" id="O13960"/>
<dbReference type="BioGRID" id="280614">
    <property type="interactions" value="11"/>
</dbReference>
<dbReference type="FunCoup" id="O13960">
    <property type="interactions" value="1"/>
</dbReference>
<dbReference type="IntAct" id="O13960">
    <property type="interactions" value="1"/>
</dbReference>
<dbReference type="MINT" id="O13960"/>
<dbReference type="STRING" id="284812.O13960"/>
<dbReference type="GlyCosmos" id="O13960">
    <property type="glycosylation" value="11 sites, No reported glycans"/>
</dbReference>
<dbReference type="iPTMnet" id="O13960"/>
<dbReference type="PaxDb" id="4896-SPAC1705.03c.1"/>
<dbReference type="EnsemblFungi" id="SPAC1705.03c.1">
    <property type="protein sequence ID" value="SPAC1705.03c.1:pep"/>
    <property type="gene ID" value="SPAC1705.03c"/>
</dbReference>
<dbReference type="PomBase" id="SPAC1705.03c">
    <property type="gene designation" value="ecm33"/>
</dbReference>
<dbReference type="VEuPathDB" id="FungiDB:SPAC1705.03c"/>
<dbReference type="eggNOG" id="ENOG502QUZC">
    <property type="taxonomic scope" value="Eukaryota"/>
</dbReference>
<dbReference type="HOGENOM" id="CLU_035846_0_1_1"/>
<dbReference type="InParanoid" id="O13960"/>
<dbReference type="OMA" id="WANNITF"/>
<dbReference type="PhylomeDB" id="O13960"/>
<dbReference type="PRO" id="PR:O13960"/>
<dbReference type="Proteomes" id="UP000002485">
    <property type="component" value="Chromosome I"/>
</dbReference>
<dbReference type="GO" id="GO:0009986">
    <property type="term" value="C:cell surface"/>
    <property type="evidence" value="ECO:0000314"/>
    <property type="project" value="PomBase"/>
</dbReference>
<dbReference type="GO" id="GO:0009897">
    <property type="term" value="C:external side of plasma membrane"/>
    <property type="evidence" value="ECO:0000303"/>
    <property type="project" value="PomBase"/>
</dbReference>
<dbReference type="GO" id="GO:0005576">
    <property type="term" value="C:extracellular region"/>
    <property type="evidence" value="ECO:0007669"/>
    <property type="project" value="UniProtKB-KW"/>
</dbReference>
<dbReference type="GO" id="GO:0009277">
    <property type="term" value="C:fungal-type cell wall"/>
    <property type="evidence" value="ECO:0000314"/>
    <property type="project" value="PomBase"/>
</dbReference>
<dbReference type="GO" id="GO:0071555">
    <property type="term" value="P:cell wall organization"/>
    <property type="evidence" value="ECO:0007669"/>
    <property type="project" value="UniProtKB-KW"/>
</dbReference>
<dbReference type="GO" id="GO:0035556">
    <property type="term" value="P:intracellular signal transduction"/>
    <property type="evidence" value="ECO:0000316"/>
    <property type="project" value="PomBase"/>
</dbReference>
<dbReference type="Gene3D" id="3.80.20.20">
    <property type="entry name" value="Receptor L-domain"/>
    <property type="match status" value="1"/>
</dbReference>
<dbReference type="InterPro" id="IPR051648">
    <property type="entry name" value="CWI-Assembly_Regulator"/>
</dbReference>
<dbReference type="InterPro" id="IPR036941">
    <property type="entry name" value="Rcpt_L-dom_sf"/>
</dbReference>
<dbReference type="PANTHER" id="PTHR31018:SF11">
    <property type="entry name" value="CELL WALL PROTEIN ECM33"/>
    <property type="match status" value="1"/>
</dbReference>
<dbReference type="PANTHER" id="PTHR31018">
    <property type="entry name" value="SPORULATION-SPECIFIC PROTEIN-RELATED"/>
    <property type="match status" value="1"/>
</dbReference>
<dbReference type="SUPFAM" id="SSF52058">
    <property type="entry name" value="L domain-like"/>
    <property type="match status" value="2"/>
</dbReference>
<evidence type="ECO:0000250" key="1"/>
<evidence type="ECO:0000255" key="2"/>
<evidence type="ECO:0000256" key="3">
    <source>
        <dbReference type="SAM" id="MobiDB-lite"/>
    </source>
</evidence>
<evidence type="ECO:0000269" key="4">
    <source>
    </source>
</evidence>
<evidence type="ECO:0000269" key="5">
    <source>
    </source>
</evidence>
<evidence type="ECO:0000305" key="6"/>
<name>ECM33_SCHPO</name>
<organism>
    <name type="scientific">Schizosaccharomyces pombe (strain 972 / ATCC 24843)</name>
    <name type="common">Fission yeast</name>
    <dbReference type="NCBI Taxonomy" id="284812"/>
    <lineage>
        <taxon>Eukaryota</taxon>
        <taxon>Fungi</taxon>
        <taxon>Dikarya</taxon>
        <taxon>Ascomycota</taxon>
        <taxon>Taphrinomycotina</taxon>
        <taxon>Schizosaccharomycetes</taxon>
        <taxon>Schizosaccharomycetales</taxon>
        <taxon>Schizosaccharomycetaceae</taxon>
        <taxon>Schizosaccharomyces</taxon>
    </lineage>
</organism>
<gene>
    <name type="primary">ecm33</name>
    <name type="ORF">SPAC1705.03c</name>
    <name type="ORF">SPAC1F2.01</name>
    <name type="ORF">SPAC23H4.19</name>
</gene>
<sequence length="421" mass="43346">MLFKSFALTLLFAAARVQAASNCSSGPYNISAQGTLDELNSCTVLNGDLYISDAGNSGITTLTVNGIESVQGDVVVSDGQYLTSLSFPSLKNVSGAFNVNNMIRMNNLATPELTSVGSLNLAVLPNLQELQFNAGLSDSDSVVIDDTQLQAIDGISLDSVTTFQVTNNRYIQEITMEGLESAQNIQISANSKGVSVNFSKLSNVTTATFDGISNVFIGNLKSAAGNLYFSNTTLDNISVPYLTEIGQSFAVLYSPELTSLNFPNLTTVGGGFVINDTGLTSIDGFPVISEIGGGLVLLGNFSSIDMPDLSDVKGALTVETKATNFTCPWSNDDSVIKGDDFTCQGSVATISATSSYDLSSTVSATSGSATSATGSATTTSYSSDSSASSSSSSSHESSAASNGFTAGALVLGSLLVAALAM</sequence>
<proteinExistence type="evidence at protein level"/>
<comment type="function">
    <text evidence="5">Involved in the negative feedback regulation of pmk1 cell integrity signaling and is linked to cellular calcium signaling.</text>
</comment>
<comment type="subcellular location">
    <subcellularLocation>
        <location evidence="1">Cell membrane</location>
        <topology evidence="1">Lipid-anchor</topology>
        <topology evidence="1">GPI-anchor</topology>
    </subcellularLocation>
    <subcellularLocation>
        <location evidence="4 5">Secreted</location>
        <location evidence="4 5">Cell wall</location>
    </subcellularLocation>
</comment>
<comment type="induction">
    <text evidence="5">Expression is under the control of atf1 and mbx1 via the putative cAMP-responsive element (CRE) sequence TTACAGTAA and the RLM1-binding sequence GTATATATAG in the promoter region.</text>
</comment>
<comment type="PTM">
    <text evidence="1">The GPI-anchor is attached to the protein in the endoplasmic reticulum and serves to target the protein to the cell surface. There, the glucosamine-inositol phospholipid moiety is cleaved off and the GPI-modified mannoprotein is covalently attached via its lipidless GPI glycan remnant to the 1,6-beta-glucan of the outer cell wall layer (By similarity).</text>
</comment>
<comment type="PTM">
    <text evidence="1">Extensively N-glycosylated.</text>
</comment>
<comment type="similarity">
    <text evidence="6">Belongs to the SPS2 family.</text>
</comment>
<feature type="signal peptide" evidence="2">
    <location>
        <begin position="1"/>
        <end position="19"/>
    </location>
</feature>
<feature type="chain" id="PRO_0000014204" description="Cell wall protein ecm33">
    <location>
        <begin position="20"/>
        <end position="398"/>
    </location>
</feature>
<feature type="propeptide" id="PRO_0000417675" description="Removed in mature form" evidence="2">
    <location>
        <begin position="399"/>
        <end position="421"/>
    </location>
</feature>
<feature type="transmembrane region" description="Helical" evidence="2">
    <location>
        <begin position="401"/>
        <end position="421"/>
    </location>
</feature>
<feature type="region of interest" description="Disordered" evidence="3">
    <location>
        <begin position="365"/>
        <end position="394"/>
    </location>
</feature>
<feature type="lipid moiety-binding region" description="GPI-anchor amidated serine" evidence="2">
    <location>
        <position position="398"/>
    </location>
</feature>
<feature type="glycosylation site" description="N-linked (GlcNAc...) asparagine" evidence="2">
    <location>
        <position position="22"/>
    </location>
</feature>
<feature type="glycosylation site" description="N-linked (GlcNAc...) asparagine" evidence="2">
    <location>
        <position position="29"/>
    </location>
</feature>
<feature type="glycosylation site" description="N-linked (GlcNAc...) asparagine" evidence="2">
    <location>
        <position position="92"/>
    </location>
</feature>
<feature type="glycosylation site" description="N-linked (GlcNAc...) asparagine" evidence="2">
    <location>
        <position position="197"/>
    </location>
</feature>
<feature type="glycosylation site" description="N-linked (GlcNAc...) asparagine" evidence="2">
    <location>
        <position position="203"/>
    </location>
</feature>
<feature type="glycosylation site" description="N-linked (GlcNAc...) asparagine" evidence="2">
    <location>
        <position position="231"/>
    </location>
</feature>
<feature type="glycosylation site" description="N-linked (GlcNAc...) asparagine" evidence="2">
    <location>
        <position position="236"/>
    </location>
</feature>
<feature type="glycosylation site" description="N-linked (GlcNAc...) asparagine" evidence="2">
    <location>
        <position position="264"/>
    </location>
</feature>
<feature type="glycosylation site" description="N-linked (GlcNAc...) asparagine" evidence="2">
    <location>
        <position position="275"/>
    </location>
</feature>
<feature type="glycosylation site" description="N-linked (GlcNAc...) asparagine" evidence="2">
    <location>
        <position position="300"/>
    </location>
</feature>
<feature type="glycosylation site" description="N-linked (GlcNAc...) asparagine" evidence="2">
    <location>
        <position position="324"/>
    </location>
</feature>
<keyword id="KW-1003">Cell membrane</keyword>
<keyword id="KW-0134">Cell wall</keyword>
<keyword id="KW-0961">Cell wall biogenesis/degradation</keyword>
<keyword id="KW-0325">Glycoprotein</keyword>
<keyword id="KW-0336">GPI-anchor</keyword>
<keyword id="KW-0449">Lipoprotein</keyword>
<keyword id="KW-0472">Membrane</keyword>
<keyword id="KW-1185">Reference proteome</keyword>
<keyword id="KW-0964">Secreted</keyword>
<keyword id="KW-0732">Signal</keyword>
<keyword id="KW-0812">Transmembrane</keyword>
<keyword id="KW-1133">Transmembrane helix</keyword>